<evidence type="ECO:0000255" key="1"/>
<evidence type="ECO:0000255" key="2">
    <source>
        <dbReference type="PROSITE-ProRule" id="PRU00297"/>
    </source>
</evidence>
<evidence type="ECO:0000255" key="3">
    <source>
        <dbReference type="PROSITE-ProRule" id="PRU10012"/>
    </source>
</evidence>
<feature type="signal peptide" evidence="1">
    <location>
        <begin position="1"/>
        <end position="22"/>
    </location>
</feature>
<feature type="chain" id="PRO_0000023714" description="Peroxidase 49">
    <location>
        <begin position="23"/>
        <end position="331"/>
    </location>
</feature>
<feature type="active site" description="Proton acceptor" evidence="2 3">
    <location>
        <position position="70"/>
    </location>
</feature>
<feature type="binding site" evidence="2">
    <location>
        <position position="71"/>
    </location>
    <ligand>
        <name>Ca(2+)</name>
        <dbReference type="ChEBI" id="CHEBI:29108"/>
        <label>1</label>
    </ligand>
</feature>
<feature type="binding site" evidence="2">
    <location>
        <position position="74"/>
    </location>
    <ligand>
        <name>Ca(2+)</name>
        <dbReference type="ChEBI" id="CHEBI:29108"/>
        <label>1</label>
    </ligand>
</feature>
<feature type="binding site" evidence="2">
    <location>
        <position position="76"/>
    </location>
    <ligand>
        <name>Ca(2+)</name>
        <dbReference type="ChEBI" id="CHEBI:29108"/>
        <label>1</label>
    </ligand>
</feature>
<feature type="binding site" evidence="2">
    <location>
        <position position="78"/>
    </location>
    <ligand>
        <name>Ca(2+)</name>
        <dbReference type="ChEBI" id="CHEBI:29108"/>
        <label>1</label>
    </ligand>
</feature>
<feature type="binding site" evidence="2">
    <location>
        <position position="80"/>
    </location>
    <ligand>
        <name>Ca(2+)</name>
        <dbReference type="ChEBI" id="CHEBI:29108"/>
        <label>1</label>
    </ligand>
</feature>
<feature type="binding site" evidence="2">
    <location>
        <position position="167"/>
    </location>
    <ligand>
        <name>substrate</name>
    </ligand>
</feature>
<feature type="binding site" description="axial binding residue" evidence="2">
    <location>
        <position position="197"/>
    </location>
    <ligand>
        <name>heme b</name>
        <dbReference type="ChEBI" id="CHEBI:60344"/>
    </ligand>
    <ligandPart>
        <name>Fe</name>
        <dbReference type="ChEBI" id="CHEBI:18248"/>
    </ligandPart>
</feature>
<feature type="binding site" evidence="2">
    <location>
        <position position="198"/>
    </location>
    <ligand>
        <name>Ca(2+)</name>
        <dbReference type="ChEBI" id="CHEBI:29108"/>
        <label>2</label>
    </ligand>
</feature>
<feature type="binding site" evidence="2">
    <location>
        <position position="249"/>
    </location>
    <ligand>
        <name>Ca(2+)</name>
        <dbReference type="ChEBI" id="CHEBI:29108"/>
        <label>2</label>
    </ligand>
</feature>
<feature type="binding site" evidence="2">
    <location>
        <position position="252"/>
    </location>
    <ligand>
        <name>Ca(2+)</name>
        <dbReference type="ChEBI" id="CHEBI:29108"/>
        <label>2</label>
    </ligand>
</feature>
<feature type="binding site" evidence="2">
    <location>
        <position position="257"/>
    </location>
    <ligand>
        <name>Ca(2+)</name>
        <dbReference type="ChEBI" id="CHEBI:29108"/>
        <label>2</label>
    </ligand>
</feature>
<feature type="site" description="Transition state stabilizer" evidence="2">
    <location>
        <position position="66"/>
    </location>
</feature>
<feature type="glycosylation site" description="N-linked (GlcNAc...) asparagine" evidence="1">
    <location>
        <position position="170"/>
    </location>
</feature>
<feature type="glycosylation site" description="N-linked (GlcNAc...) asparagine" evidence="1">
    <location>
        <position position="213"/>
    </location>
</feature>
<feature type="disulfide bond" evidence="2">
    <location>
        <begin position="39"/>
        <end position="119"/>
    </location>
</feature>
<feature type="disulfide bond" evidence="2">
    <location>
        <begin position="72"/>
        <end position="77"/>
    </location>
</feature>
<feature type="disulfide bond" evidence="2">
    <location>
        <begin position="125"/>
        <end position="326"/>
    </location>
</feature>
<feature type="disulfide bond" evidence="2">
    <location>
        <begin position="204"/>
        <end position="236"/>
    </location>
</feature>
<accession>O23237</accession>
<organism>
    <name type="scientific">Arabidopsis thaliana</name>
    <name type="common">Mouse-ear cress</name>
    <dbReference type="NCBI Taxonomy" id="3702"/>
    <lineage>
        <taxon>Eukaryota</taxon>
        <taxon>Viridiplantae</taxon>
        <taxon>Streptophyta</taxon>
        <taxon>Embryophyta</taxon>
        <taxon>Tracheophyta</taxon>
        <taxon>Spermatophyta</taxon>
        <taxon>Magnoliopsida</taxon>
        <taxon>eudicotyledons</taxon>
        <taxon>Gunneridae</taxon>
        <taxon>Pentapetalae</taxon>
        <taxon>rosids</taxon>
        <taxon>malvids</taxon>
        <taxon>Brassicales</taxon>
        <taxon>Brassicaceae</taxon>
        <taxon>Camelineae</taxon>
        <taxon>Arabidopsis</taxon>
    </lineage>
</organism>
<keyword id="KW-0106">Calcium</keyword>
<keyword id="KW-1015">Disulfide bond</keyword>
<keyword id="KW-0325">Glycoprotein</keyword>
<keyword id="KW-0349">Heme</keyword>
<keyword id="KW-0376">Hydrogen peroxide</keyword>
<keyword id="KW-0408">Iron</keyword>
<keyword id="KW-0479">Metal-binding</keyword>
<keyword id="KW-0560">Oxidoreductase</keyword>
<keyword id="KW-0575">Peroxidase</keyword>
<keyword id="KW-1185">Reference proteome</keyword>
<keyword id="KW-0964">Secreted</keyword>
<keyword id="KW-0732">Signal</keyword>
<gene>
    <name type="primary">PER49</name>
    <name type="synonym">DIDI 6G-3B</name>
    <name type="synonym">P49</name>
    <name type="ordered locus">At4g36430</name>
    <name type="ORF">AP22.54</name>
    <name type="ORF">C7A10.930</name>
</gene>
<comment type="function">
    <text>Removal of H(2)O(2), oxidation of toxic reductants, biosynthesis and degradation of lignin, suberization, auxin catabolism, response to environmental stresses such as wounding, pathogen attack and oxidative stress. These functions might be dependent on each isozyme/isoform in each plant tissue.</text>
</comment>
<comment type="catalytic activity">
    <reaction>
        <text>2 a phenolic donor + H2O2 = 2 a phenolic radical donor + 2 H2O</text>
        <dbReference type="Rhea" id="RHEA:56136"/>
        <dbReference type="ChEBI" id="CHEBI:15377"/>
        <dbReference type="ChEBI" id="CHEBI:16240"/>
        <dbReference type="ChEBI" id="CHEBI:139520"/>
        <dbReference type="ChEBI" id="CHEBI:139521"/>
        <dbReference type="EC" id="1.11.1.7"/>
    </reaction>
</comment>
<comment type="cofactor">
    <cofactor evidence="2">
        <name>heme b</name>
        <dbReference type="ChEBI" id="CHEBI:60344"/>
    </cofactor>
    <text evidence="2">Binds 1 heme b (iron(II)-protoporphyrin IX) group per subunit.</text>
</comment>
<comment type="cofactor">
    <cofactor evidence="2">
        <name>Ca(2+)</name>
        <dbReference type="ChEBI" id="CHEBI:29108"/>
    </cofactor>
    <text evidence="2">Binds 2 calcium ions per subunit.</text>
</comment>
<comment type="subcellular location">
    <subcellularLocation>
        <location evidence="2">Secreted</location>
    </subcellularLocation>
</comment>
<comment type="miscellaneous">
    <text>There are 73 peroxidase genes in A.thaliana.</text>
</comment>
<comment type="similarity">
    <text evidence="2">Belongs to the peroxidase family. Classical plant (class III) peroxidase subfamily.</text>
</comment>
<reference key="1">
    <citation type="journal article" date="2001" name="Mol. Plant Microbe Interact.">
        <title>Arabidopsis thaliana genes expressed in the early compatible interaction with root-knot nematodes.</title>
        <authorList>
            <person name="Vercauteren I."/>
            <person name="van der Schueren E."/>
            <person name="Van Montagu M."/>
            <person name="Gheysen G."/>
        </authorList>
    </citation>
    <scope>NUCLEOTIDE SEQUENCE [MRNA]</scope>
    <source>
        <strain>cv. Columbia</strain>
        <tissue>Root</tissue>
    </source>
</reference>
<reference key="2">
    <citation type="journal article" date="2002" name="Eur. J. Biochem.">
        <title>Structural diversity and transcription of class III peroxidases from Arabidopsis thaliana.</title>
        <authorList>
            <person name="Welinder K.G."/>
            <person name="Justesen A.F."/>
            <person name="Kjaersgaard I.V.H."/>
            <person name="Jensen R.B."/>
            <person name="Rasmussen S.K."/>
            <person name="Jespersen H.M."/>
            <person name="Duroux L."/>
        </authorList>
    </citation>
    <scope>NUCLEOTIDE SEQUENCE [MRNA]</scope>
    <source>
        <strain>cv. Columbia</strain>
        <tissue>Root</tissue>
    </source>
</reference>
<reference key="3">
    <citation type="journal article" date="1998" name="Nature">
        <title>Analysis of 1.9 Mb of contiguous sequence from chromosome 4 of Arabidopsis thaliana.</title>
        <authorList>
            <person name="Bevan M."/>
            <person name="Bancroft I."/>
            <person name="Bent E."/>
            <person name="Love K."/>
            <person name="Goodman H.M."/>
            <person name="Dean C."/>
            <person name="Bergkamp R."/>
            <person name="Dirkse W."/>
            <person name="van Staveren M."/>
            <person name="Stiekema W."/>
            <person name="Drost L."/>
            <person name="Ridley P."/>
            <person name="Hudson S.-A."/>
            <person name="Patel K."/>
            <person name="Murphy G."/>
            <person name="Piffanelli P."/>
            <person name="Wedler H."/>
            <person name="Wedler E."/>
            <person name="Wambutt R."/>
            <person name="Weitzenegger T."/>
            <person name="Pohl T."/>
            <person name="Terryn N."/>
            <person name="Gielen J."/>
            <person name="Villarroel R."/>
            <person name="De Clercq R."/>
            <person name="van Montagu M."/>
            <person name="Lecharny A."/>
            <person name="Aubourg S."/>
            <person name="Gy I."/>
            <person name="Kreis M."/>
            <person name="Lao N."/>
            <person name="Kavanagh T."/>
            <person name="Hempel S."/>
            <person name="Kotter P."/>
            <person name="Entian K.-D."/>
            <person name="Rieger M."/>
            <person name="Schaefer M."/>
            <person name="Funk B."/>
            <person name="Mueller-Auer S."/>
            <person name="Silvey M."/>
            <person name="James R."/>
            <person name="Monfort A."/>
            <person name="Pons A."/>
            <person name="Puigdomenech P."/>
            <person name="Douka A."/>
            <person name="Voukelatou E."/>
            <person name="Milioni D."/>
            <person name="Hatzopoulos P."/>
            <person name="Piravandi E."/>
            <person name="Obermaier B."/>
            <person name="Hilbert H."/>
            <person name="Duesterhoeft A."/>
            <person name="Moores T."/>
            <person name="Jones J.D.G."/>
            <person name="Eneva T."/>
            <person name="Palme K."/>
            <person name="Benes V."/>
            <person name="Rechmann S."/>
            <person name="Ansorge W."/>
            <person name="Cooke R."/>
            <person name="Berger C."/>
            <person name="Delseny M."/>
            <person name="Voet M."/>
            <person name="Volckaert G."/>
            <person name="Mewes H.-W."/>
            <person name="Klosterman S."/>
            <person name="Schueller C."/>
            <person name="Chalwatzis N."/>
        </authorList>
    </citation>
    <scope>NUCLEOTIDE SEQUENCE [LARGE SCALE GENOMIC DNA]</scope>
    <source>
        <strain>cv. Columbia</strain>
    </source>
</reference>
<reference key="4">
    <citation type="journal article" date="1999" name="Nature">
        <title>Sequence and analysis of chromosome 4 of the plant Arabidopsis thaliana.</title>
        <authorList>
            <person name="Mayer K.F.X."/>
            <person name="Schueller C."/>
            <person name="Wambutt R."/>
            <person name="Murphy G."/>
            <person name="Volckaert G."/>
            <person name="Pohl T."/>
            <person name="Duesterhoeft A."/>
            <person name="Stiekema W."/>
            <person name="Entian K.-D."/>
            <person name="Terryn N."/>
            <person name="Harris B."/>
            <person name="Ansorge W."/>
            <person name="Brandt P."/>
            <person name="Grivell L.A."/>
            <person name="Rieger M."/>
            <person name="Weichselgartner M."/>
            <person name="de Simone V."/>
            <person name="Obermaier B."/>
            <person name="Mache R."/>
            <person name="Mueller M."/>
            <person name="Kreis M."/>
            <person name="Delseny M."/>
            <person name="Puigdomenech P."/>
            <person name="Watson M."/>
            <person name="Schmidtheini T."/>
            <person name="Reichert B."/>
            <person name="Portetelle D."/>
            <person name="Perez-Alonso M."/>
            <person name="Boutry M."/>
            <person name="Bancroft I."/>
            <person name="Vos P."/>
            <person name="Hoheisel J."/>
            <person name="Zimmermann W."/>
            <person name="Wedler H."/>
            <person name="Ridley P."/>
            <person name="Langham S.-A."/>
            <person name="McCullagh B."/>
            <person name="Bilham L."/>
            <person name="Robben J."/>
            <person name="van der Schueren J."/>
            <person name="Grymonprez B."/>
            <person name="Chuang Y.-J."/>
            <person name="Vandenbussche F."/>
            <person name="Braeken M."/>
            <person name="Weltjens I."/>
            <person name="Voet M."/>
            <person name="Bastiaens I."/>
            <person name="Aert R."/>
            <person name="Defoor E."/>
            <person name="Weitzenegger T."/>
            <person name="Bothe G."/>
            <person name="Ramsperger U."/>
            <person name="Hilbert H."/>
            <person name="Braun M."/>
            <person name="Holzer E."/>
            <person name="Brandt A."/>
            <person name="Peters S."/>
            <person name="van Staveren M."/>
            <person name="Dirkse W."/>
            <person name="Mooijman P."/>
            <person name="Klein Lankhorst R."/>
            <person name="Rose M."/>
            <person name="Hauf J."/>
            <person name="Koetter P."/>
            <person name="Berneiser S."/>
            <person name="Hempel S."/>
            <person name="Feldpausch M."/>
            <person name="Lamberth S."/>
            <person name="Van den Daele H."/>
            <person name="De Keyser A."/>
            <person name="Buysshaert C."/>
            <person name="Gielen J."/>
            <person name="Villarroel R."/>
            <person name="De Clercq R."/>
            <person name="van Montagu M."/>
            <person name="Rogers J."/>
            <person name="Cronin A."/>
            <person name="Quail M.A."/>
            <person name="Bray-Allen S."/>
            <person name="Clark L."/>
            <person name="Doggett J."/>
            <person name="Hall S."/>
            <person name="Kay M."/>
            <person name="Lennard N."/>
            <person name="McLay K."/>
            <person name="Mayes R."/>
            <person name="Pettett A."/>
            <person name="Rajandream M.A."/>
            <person name="Lyne M."/>
            <person name="Benes V."/>
            <person name="Rechmann S."/>
            <person name="Borkova D."/>
            <person name="Bloecker H."/>
            <person name="Scharfe M."/>
            <person name="Grimm M."/>
            <person name="Loehnert T.-H."/>
            <person name="Dose S."/>
            <person name="de Haan M."/>
            <person name="Maarse A.C."/>
            <person name="Schaefer M."/>
            <person name="Mueller-Auer S."/>
            <person name="Gabel C."/>
            <person name="Fuchs M."/>
            <person name="Fartmann B."/>
            <person name="Granderath K."/>
            <person name="Dauner D."/>
            <person name="Herzl A."/>
            <person name="Neumann S."/>
            <person name="Argiriou A."/>
            <person name="Vitale D."/>
            <person name="Liguori R."/>
            <person name="Piravandi E."/>
            <person name="Massenet O."/>
            <person name="Quigley F."/>
            <person name="Clabauld G."/>
            <person name="Muendlein A."/>
            <person name="Felber R."/>
            <person name="Schnabl S."/>
            <person name="Hiller R."/>
            <person name="Schmidt W."/>
            <person name="Lecharny A."/>
            <person name="Aubourg S."/>
            <person name="Chefdor F."/>
            <person name="Cooke R."/>
            <person name="Berger C."/>
            <person name="Monfort A."/>
            <person name="Casacuberta E."/>
            <person name="Gibbons T."/>
            <person name="Weber N."/>
            <person name="Vandenbol M."/>
            <person name="Bargues M."/>
            <person name="Terol J."/>
            <person name="Torres A."/>
            <person name="Perez-Perez A."/>
            <person name="Purnelle B."/>
            <person name="Bent E."/>
            <person name="Johnson S."/>
            <person name="Tacon D."/>
            <person name="Jesse T."/>
            <person name="Heijnen L."/>
            <person name="Schwarz S."/>
            <person name="Scholler P."/>
            <person name="Heber S."/>
            <person name="Francs P."/>
            <person name="Bielke C."/>
            <person name="Frishman D."/>
            <person name="Haase D."/>
            <person name="Lemcke K."/>
            <person name="Mewes H.-W."/>
            <person name="Stocker S."/>
            <person name="Zaccaria P."/>
            <person name="Bevan M."/>
            <person name="Wilson R.K."/>
            <person name="de la Bastide M."/>
            <person name="Habermann K."/>
            <person name="Parnell L."/>
            <person name="Dedhia N."/>
            <person name="Gnoj L."/>
            <person name="Schutz K."/>
            <person name="Huang E."/>
            <person name="Spiegel L."/>
            <person name="Sekhon M."/>
            <person name="Murray J."/>
            <person name="Sheet P."/>
            <person name="Cordes M."/>
            <person name="Abu-Threideh J."/>
            <person name="Stoneking T."/>
            <person name="Kalicki J."/>
            <person name="Graves T."/>
            <person name="Harmon G."/>
            <person name="Edwards J."/>
            <person name="Latreille P."/>
            <person name="Courtney L."/>
            <person name="Cloud J."/>
            <person name="Abbott A."/>
            <person name="Scott K."/>
            <person name="Johnson D."/>
            <person name="Minx P."/>
            <person name="Bentley D."/>
            <person name="Fulton B."/>
            <person name="Miller N."/>
            <person name="Greco T."/>
            <person name="Kemp K."/>
            <person name="Kramer J."/>
            <person name="Fulton L."/>
            <person name="Mardis E."/>
            <person name="Dante M."/>
            <person name="Pepin K."/>
            <person name="Hillier L.W."/>
            <person name="Nelson J."/>
            <person name="Spieth J."/>
            <person name="Ryan E."/>
            <person name="Andrews S."/>
            <person name="Geisel C."/>
            <person name="Layman D."/>
            <person name="Du H."/>
            <person name="Ali J."/>
            <person name="Berghoff A."/>
            <person name="Jones K."/>
            <person name="Drone K."/>
            <person name="Cotton M."/>
            <person name="Joshu C."/>
            <person name="Antonoiu B."/>
            <person name="Zidanic M."/>
            <person name="Strong C."/>
            <person name="Sun H."/>
            <person name="Lamar B."/>
            <person name="Yordan C."/>
            <person name="Ma P."/>
            <person name="Zhong J."/>
            <person name="Preston R."/>
            <person name="Vil D."/>
            <person name="Shekher M."/>
            <person name="Matero A."/>
            <person name="Shah R."/>
            <person name="Swaby I.K."/>
            <person name="O'Shaughnessy A."/>
            <person name="Rodriguez M."/>
            <person name="Hoffman J."/>
            <person name="Till S."/>
            <person name="Granat S."/>
            <person name="Shohdy N."/>
            <person name="Hasegawa A."/>
            <person name="Hameed A."/>
            <person name="Lodhi M."/>
            <person name="Johnson A."/>
            <person name="Chen E."/>
            <person name="Marra M.A."/>
            <person name="Martienssen R."/>
            <person name="McCombie W.R."/>
        </authorList>
    </citation>
    <scope>NUCLEOTIDE SEQUENCE [LARGE SCALE GENOMIC DNA]</scope>
    <source>
        <strain>cv. Columbia</strain>
    </source>
</reference>
<reference key="5">
    <citation type="journal article" date="2017" name="Plant J.">
        <title>Araport11: a complete reannotation of the Arabidopsis thaliana reference genome.</title>
        <authorList>
            <person name="Cheng C.Y."/>
            <person name="Krishnakumar V."/>
            <person name="Chan A.P."/>
            <person name="Thibaud-Nissen F."/>
            <person name="Schobel S."/>
            <person name="Town C.D."/>
        </authorList>
    </citation>
    <scope>GENOME REANNOTATION</scope>
    <source>
        <strain>cv. Columbia</strain>
    </source>
</reference>
<reference key="6">
    <citation type="journal article" date="2003" name="Science">
        <title>Empirical analysis of transcriptional activity in the Arabidopsis genome.</title>
        <authorList>
            <person name="Yamada K."/>
            <person name="Lim J."/>
            <person name="Dale J.M."/>
            <person name="Chen H."/>
            <person name="Shinn P."/>
            <person name="Palm C.J."/>
            <person name="Southwick A.M."/>
            <person name="Wu H.C."/>
            <person name="Kim C.J."/>
            <person name="Nguyen M."/>
            <person name="Pham P.K."/>
            <person name="Cheuk R.F."/>
            <person name="Karlin-Newmann G."/>
            <person name="Liu S.X."/>
            <person name="Lam B."/>
            <person name="Sakano H."/>
            <person name="Wu T."/>
            <person name="Yu G."/>
            <person name="Miranda M."/>
            <person name="Quach H.L."/>
            <person name="Tripp M."/>
            <person name="Chang C.H."/>
            <person name="Lee J.M."/>
            <person name="Toriumi M.J."/>
            <person name="Chan M.M."/>
            <person name="Tang C.C."/>
            <person name="Onodera C.S."/>
            <person name="Deng J.M."/>
            <person name="Akiyama K."/>
            <person name="Ansari Y."/>
            <person name="Arakawa T."/>
            <person name="Banh J."/>
            <person name="Banno F."/>
            <person name="Bowser L."/>
            <person name="Brooks S.Y."/>
            <person name="Carninci P."/>
            <person name="Chao Q."/>
            <person name="Choy N."/>
            <person name="Enju A."/>
            <person name="Goldsmith A.D."/>
            <person name="Gurjal M."/>
            <person name="Hansen N.F."/>
            <person name="Hayashizaki Y."/>
            <person name="Johnson-Hopson C."/>
            <person name="Hsuan V.W."/>
            <person name="Iida K."/>
            <person name="Karnes M."/>
            <person name="Khan S."/>
            <person name="Koesema E."/>
            <person name="Ishida J."/>
            <person name="Jiang P.X."/>
            <person name="Jones T."/>
            <person name="Kawai J."/>
            <person name="Kamiya A."/>
            <person name="Meyers C."/>
            <person name="Nakajima M."/>
            <person name="Narusaka M."/>
            <person name="Seki M."/>
            <person name="Sakurai T."/>
            <person name="Satou M."/>
            <person name="Tamse R."/>
            <person name="Vaysberg M."/>
            <person name="Wallender E.K."/>
            <person name="Wong C."/>
            <person name="Yamamura Y."/>
            <person name="Yuan S."/>
            <person name="Shinozaki K."/>
            <person name="Davis R.W."/>
            <person name="Theologis A."/>
            <person name="Ecker J.R."/>
        </authorList>
    </citation>
    <scope>NUCLEOTIDE SEQUENCE [LARGE SCALE MRNA]</scope>
    <source>
        <strain>cv. Columbia</strain>
    </source>
</reference>
<reference key="7">
    <citation type="journal article" date="2002" name="Gene">
        <title>Analysis and expression of the class III peroxidase large gene family in Arabidopsis thaliana.</title>
        <authorList>
            <person name="Tognolli M."/>
            <person name="Penel C."/>
            <person name="Greppin H."/>
            <person name="Simon P."/>
        </authorList>
    </citation>
    <scope>GENE FAMILY ORGANIZATION</scope>
    <scope>NOMENCLATURE</scope>
    <source>
        <strain>cv. Columbia</strain>
    </source>
</reference>
<proteinExistence type="evidence at transcript level"/>
<sequence length="331" mass="36164">MARLTSFLLLLSLICFVPLCLCDKSYGGKLFPGYYAHSCPQVNEIVRSVVAKAVARETRMAASLLRLHFHDCFVQGCDGSLLLDSSGRVATEKNSNPNSKSARGFDVVDQIKAELEKQCPGTVSCADVLTLAARDSSVLTGGPSWVVPLGRRDSRSASLSQSNNNIPAPNNTFQTILSKFNRQGLDITDLVALSGSHTIGFSRCTSFRQRLYNQSGNGSPDMTLEQSFAANLRQRCPKSGGDQILSVLDIISAASFDNSYFKNLIENKGLLNSDQVLFSSNEKSRELVKKYAEDQGEFFEQFAESMIKMGNISPLTGSSGEIRKNCRKINS</sequence>
<protein>
    <recommendedName>
        <fullName>Peroxidase 49</fullName>
        <shortName>Atperox P49</shortName>
        <ecNumber>1.11.1.7</ecNumber>
    </recommendedName>
    <alternativeName>
        <fullName>ATP31</fullName>
    </alternativeName>
</protein>
<dbReference type="EC" id="1.11.1.7"/>
<dbReference type="EMBL" id="AJ286345">
    <property type="protein sequence ID" value="CAB71009.1"/>
    <property type="molecule type" value="mRNA"/>
</dbReference>
<dbReference type="EMBL" id="AF452384">
    <property type="protein sequence ID" value="AAL40848.1"/>
    <property type="molecule type" value="mRNA"/>
</dbReference>
<dbReference type="EMBL" id="Z99708">
    <property type="protein sequence ID" value="CAB16848.1"/>
    <property type="molecule type" value="Genomic_DNA"/>
</dbReference>
<dbReference type="EMBL" id="AL161589">
    <property type="protein sequence ID" value="CAB80309.1"/>
    <property type="molecule type" value="Genomic_DNA"/>
</dbReference>
<dbReference type="EMBL" id="CP002687">
    <property type="protein sequence ID" value="AEE86655.1"/>
    <property type="molecule type" value="Genomic_DNA"/>
</dbReference>
<dbReference type="EMBL" id="AY074296">
    <property type="protein sequence ID" value="AAL66993.1"/>
    <property type="molecule type" value="mRNA"/>
</dbReference>
<dbReference type="EMBL" id="AY117238">
    <property type="protein sequence ID" value="AAM51313.1"/>
    <property type="molecule type" value="mRNA"/>
</dbReference>
<dbReference type="PIR" id="A85430">
    <property type="entry name" value="A85430"/>
</dbReference>
<dbReference type="RefSeq" id="NP_195361.1">
    <property type="nucleotide sequence ID" value="NM_119806.3"/>
</dbReference>
<dbReference type="SMR" id="O23237"/>
<dbReference type="BioGRID" id="15077">
    <property type="interactions" value="2"/>
</dbReference>
<dbReference type="FunCoup" id="O23237">
    <property type="interactions" value="139"/>
</dbReference>
<dbReference type="STRING" id="3702.O23237"/>
<dbReference type="PeroxiBase" id="215">
    <property type="entry name" value="AtPrx49"/>
</dbReference>
<dbReference type="GlyCosmos" id="O23237">
    <property type="glycosylation" value="2 sites, No reported glycans"/>
</dbReference>
<dbReference type="GlyGen" id="O23237">
    <property type="glycosylation" value="2 sites"/>
</dbReference>
<dbReference type="SwissPalm" id="O23237"/>
<dbReference type="PaxDb" id="3702-AT4G36430.1"/>
<dbReference type="ProteomicsDB" id="236698"/>
<dbReference type="EnsemblPlants" id="AT4G36430.1">
    <property type="protein sequence ID" value="AT4G36430.1"/>
    <property type="gene ID" value="AT4G36430"/>
</dbReference>
<dbReference type="GeneID" id="829795"/>
<dbReference type="Gramene" id="AT4G36430.1">
    <property type="protein sequence ID" value="AT4G36430.1"/>
    <property type="gene ID" value="AT4G36430"/>
</dbReference>
<dbReference type="KEGG" id="ath:AT4G36430"/>
<dbReference type="Araport" id="AT4G36430"/>
<dbReference type="TAIR" id="AT4G36430"/>
<dbReference type="eggNOG" id="ENOG502QR5A">
    <property type="taxonomic scope" value="Eukaryota"/>
</dbReference>
<dbReference type="HOGENOM" id="CLU_010543_0_1_1"/>
<dbReference type="InParanoid" id="O23237"/>
<dbReference type="OMA" id="FPGYYAH"/>
<dbReference type="PhylomeDB" id="O23237"/>
<dbReference type="BioCyc" id="ARA:AT4G36430-MONOMER"/>
<dbReference type="PRO" id="PR:O23237"/>
<dbReference type="Proteomes" id="UP000006548">
    <property type="component" value="Chromosome 4"/>
</dbReference>
<dbReference type="ExpressionAtlas" id="O23237">
    <property type="expression patterns" value="baseline and differential"/>
</dbReference>
<dbReference type="GO" id="GO:0005576">
    <property type="term" value="C:extracellular region"/>
    <property type="evidence" value="ECO:0007669"/>
    <property type="project" value="UniProtKB-SubCell"/>
</dbReference>
<dbReference type="GO" id="GO:0020037">
    <property type="term" value="F:heme binding"/>
    <property type="evidence" value="ECO:0007669"/>
    <property type="project" value="InterPro"/>
</dbReference>
<dbReference type="GO" id="GO:0140825">
    <property type="term" value="F:lactoperoxidase activity"/>
    <property type="evidence" value="ECO:0007669"/>
    <property type="project" value="UniProtKB-EC"/>
</dbReference>
<dbReference type="GO" id="GO:0046872">
    <property type="term" value="F:metal ion binding"/>
    <property type="evidence" value="ECO:0007669"/>
    <property type="project" value="UniProtKB-KW"/>
</dbReference>
<dbReference type="GO" id="GO:0042744">
    <property type="term" value="P:hydrogen peroxide catabolic process"/>
    <property type="evidence" value="ECO:0007669"/>
    <property type="project" value="UniProtKB-KW"/>
</dbReference>
<dbReference type="GO" id="GO:0006979">
    <property type="term" value="P:response to oxidative stress"/>
    <property type="evidence" value="ECO:0007669"/>
    <property type="project" value="InterPro"/>
</dbReference>
<dbReference type="CDD" id="cd00693">
    <property type="entry name" value="secretory_peroxidase"/>
    <property type="match status" value="1"/>
</dbReference>
<dbReference type="FunFam" id="1.10.420.10:FF:000001">
    <property type="entry name" value="Peroxidase"/>
    <property type="match status" value="1"/>
</dbReference>
<dbReference type="FunFam" id="1.10.520.10:FF:000001">
    <property type="entry name" value="Peroxidase"/>
    <property type="match status" value="1"/>
</dbReference>
<dbReference type="Gene3D" id="1.10.520.10">
    <property type="match status" value="1"/>
</dbReference>
<dbReference type="Gene3D" id="1.10.420.10">
    <property type="entry name" value="Peroxidase, domain 2"/>
    <property type="match status" value="1"/>
</dbReference>
<dbReference type="InterPro" id="IPR002016">
    <property type="entry name" value="Haem_peroxidase"/>
</dbReference>
<dbReference type="InterPro" id="IPR010255">
    <property type="entry name" value="Haem_peroxidase_sf"/>
</dbReference>
<dbReference type="InterPro" id="IPR000823">
    <property type="entry name" value="Peroxidase_pln"/>
</dbReference>
<dbReference type="InterPro" id="IPR019794">
    <property type="entry name" value="Peroxidases_AS"/>
</dbReference>
<dbReference type="InterPro" id="IPR019793">
    <property type="entry name" value="Peroxidases_heam-ligand_BS"/>
</dbReference>
<dbReference type="InterPro" id="IPR033905">
    <property type="entry name" value="Secretory_peroxidase"/>
</dbReference>
<dbReference type="PANTHER" id="PTHR31388:SF182">
    <property type="entry name" value="PEROXIDASE 49"/>
    <property type="match status" value="1"/>
</dbReference>
<dbReference type="PANTHER" id="PTHR31388">
    <property type="entry name" value="PEROXIDASE 72-RELATED"/>
    <property type="match status" value="1"/>
</dbReference>
<dbReference type="Pfam" id="PF00141">
    <property type="entry name" value="peroxidase"/>
    <property type="match status" value="1"/>
</dbReference>
<dbReference type="PRINTS" id="PR00458">
    <property type="entry name" value="PEROXIDASE"/>
</dbReference>
<dbReference type="PRINTS" id="PR00461">
    <property type="entry name" value="PLPEROXIDASE"/>
</dbReference>
<dbReference type="SUPFAM" id="SSF48113">
    <property type="entry name" value="Heme-dependent peroxidases"/>
    <property type="match status" value="1"/>
</dbReference>
<dbReference type="PROSITE" id="PS00435">
    <property type="entry name" value="PEROXIDASE_1"/>
    <property type="match status" value="1"/>
</dbReference>
<dbReference type="PROSITE" id="PS00436">
    <property type="entry name" value="PEROXIDASE_2"/>
    <property type="match status" value="1"/>
</dbReference>
<dbReference type="PROSITE" id="PS50873">
    <property type="entry name" value="PEROXIDASE_4"/>
    <property type="match status" value="1"/>
</dbReference>
<name>PER49_ARATH</name>